<comment type="catalytic activity">
    <reaction evidence="1">
        <text>(4aS,6R)-4a-hydroxy-L-erythro-5,6,7,8-tetrahydrobiopterin = (6R)-L-erythro-6,7-dihydrobiopterin + H2O</text>
        <dbReference type="Rhea" id="RHEA:11920"/>
        <dbReference type="ChEBI" id="CHEBI:15377"/>
        <dbReference type="ChEBI" id="CHEBI:15642"/>
        <dbReference type="ChEBI" id="CHEBI:43120"/>
        <dbReference type="EC" id="4.2.1.96"/>
    </reaction>
</comment>
<comment type="similarity">
    <text evidence="1">Belongs to the pterin-4-alpha-carbinolamine dehydratase family.</text>
</comment>
<evidence type="ECO:0000255" key="1">
    <source>
        <dbReference type="HAMAP-Rule" id="MF_00434"/>
    </source>
</evidence>
<keyword id="KW-0456">Lyase</keyword>
<gene>
    <name type="ordered locus">Shewmr4_2606</name>
</gene>
<reference key="1">
    <citation type="submission" date="2006-08" db="EMBL/GenBank/DDBJ databases">
        <title>Complete sequence of Shewanella sp. MR-4.</title>
        <authorList>
            <consortium name="US DOE Joint Genome Institute"/>
            <person name="Copeland A."/>
            <person name="Lucas S."/>
            <person name="Lapidus A."/>
            <person name="Barry K."/>
            <person name="Detter J.C."/>
            <person name="Glavina del Rio T."/>
            <person name="Hammon N."/>
            <person name="Israni S."/>
            <person name="Dalin E."/>
            <person name="Tice H."/>
            <person name="Pitluck S."/>
            <person name="Kiss H."/>
            <person name="Brettin T."/>
            <person name="Bruce D."/>
            <person name="Han C."/>
            <person name="Tapia R."/>
            <person name="Gilna P."/>
            <person name="Schmutz J."/>
            <person name="Larimer F."/>
            <person name="Land M."/>
            <person name="Hauser L."/>
            <person name="Kyrpides N."/>
            <person name="Mikhailova N."/>
            <person name="Nealson K."/>
            <person name="Konstantinidis K."/>
            <person name="Klappenbach J."/>
            <person name="Tiedje J."/>
            <person name="Richardson P."/>
        </authorList>
    </citation>
    <scope>NUCLEOTIDE SEQUENCE [LARGE SCALE GENOMIC DNA]</scope>
    <source>
        <strain>MR-4</strain>
    </source>
</reference>
<name>PHS_SHESM</name>
<feature type="chain" id="PRO_1000050460" description="Putative pterin-4-alpha-carbinolamine dehydratase">
    <location>
        <begin position="1"/>
        <end position="112"/>
    </location>
</feature>
<dbReference type="EC" id="4.2.1.96" evidence="1"/>
<dbReference type="EMBL" id="CP000446">
    <property type="protein sequence ID" value="ABI39677.1"/>
    <property type="molecule type" value="Genomic_DNA"/>
</dbReference>
<dbReference type="RefSeq" id="WP_011623358.1">
    <property type="nucleotide sequence ID" value="NC_008321.1"/>
</dbReference>
<dbReference type="SMR" id="Q0HGZ0"/>
<dbReference type="KEGG" id="she:Shewmr4_2606"/>
<dbReference type="HOGENOM" id="CLU_081974_2_2_6"/>
<dbReference type="GO" id="GO:0008124">
    <property type="term" value="F:4-alpha-hydroxytetrahydrobiopterin dehydratase activity"/>
    <property type="evidence" value="ECO:0007669"/>
    <property type="project" value="UniProtKB-UniRule"/>
</dbReference>
<dbReference type="GO" id="GO:0006729">
    <property type="term" value="P:tetrahydrobiopterin biosynthetic process"/>
    <property type="evidence" value="ECO:0007669"/>
    <property type="project" value="InterPro"/>
</dbReference>
<dbReference type="CDD" id="cd00913">
    <property type="entry name" value="PCD_DCoH_subfamily_a"/>
    <property type="match status" value="1"/>
</dbReference>
<dbReference type="Gene3D" id="3.30.1360.20">
    <property type="entry name" value="Transcriptional coactivator/pterin dehydratase"/>
    <property type="match status" value="1"/>
</dbReference>
<dbReference type="HAMAP" id="MF_00434">
    <property type="entry name" value="Pterin_4_alpha"/>
    <property type="match status" value="1"/>
</dbReference>
<dbReference type="InterPro" id="IPR036428">
    <property type="entry name" value="PCD_sf"/>
</dbReference>
<dbReference type="InterPro" id="IPR050376">
    <property type="entry name" value="Pterin-4-alpha-carb_dehyd"/>
</dbReference>
<dbReference type="InterPro" id="IPR001533">
    <property type="entry name" value="Pterin_deHydtase"/>
</dbReference>
<dbReference type="NCBIfam" id="NF002016">
    <property type="entry name" value="PRK00823.1-1"/>
    <property type="match status" value="1"/>
</dbReference>
<dbReference type="PANTHER" id="PTHR42805">
    <property type="entry name" value="PTERIN-4-ALPHA-CARBINOLAMINE DEHYDRATASE-RELATED"/>
    <property type="match status" value="1"/>
</dbReference>
<dbReference type="PANTHER" id="PTHR42805:SF1">
    <property type="entry name" value="PTERIN-4-ALPHA-CARBINOLAMINE DEHYDRATASE-RELATED"/>
    <property type="match status" value="1"/>
</dbReference>
<dbReference type="Pfam" id="PF01329">
    <property type="entry name" value="Pterin_4a"/>
    <property type="match status" value="1"/>
</dbReference>
<dbReference type="SUPFAM" id="SSF55248">
    <property type="entry name" value="PCD-like"/>
    <property type="match status" value="1"/>
</dbReference>
<sequence>MTALTQMKCEACQADAPKVTDEELAELIRMIPDWGVQVRDGIMQLERVYKFKNFKLAMAFTNKLADLAEEEFHHPGILTEWGKVTVTWWSHSIKGLHKNDFIMAAKTDQLLD</sequence>
<organism>
    <name type="scientific">Shewanella sp. (strain MR-4)</name>
    <dbReference type="NCBI Taxonomy" id="60480"/>
    <lineage>
        <taxon>Bacteria</taxon>
        <taxon>Pseudomonadati</taxon>
        <taxon>Pseudomonadota</taxon>
        <taxon>Gammaproteobacteria</taxon>
        <taxon>Alteromonadales</taxon>
        <taxon>Shewanellaceae</taxon>
        <taxon>Shewanella</taxon>
    </lineage>
</organism>
<protein>
    <recommendedName>
        <fullName evidence="1">Putative pterin-4-alpha-carbinolamine dehydratase</fullName>
        <shortName evidence="1">PHS</shortName>
        <ecNumber evidence="1">4.2.1.96</ecNumber>
    </recommendedName>
    <alternativeName>
        <fullName evidence="1">4-alpha-hydroxy-tetrahydropterin dehydratase</fullName>
    </alternativeName>
    <alternativeName>
        <fullName evidence="1">Pterin carbinolamine dehydratase</fullName>
        <shortName evidence="1">PCD</shortName>
    </alternativeName>
</protein>
<accession>Q0HGZ0</accession>
<proteinExistence type="inferred from homology"/>